<keyword id="KW-0963">Cytoplasm</keyword>
<keyword id="KW-0256">Endoplasmic reticulum</keyword>
<keyword id="KW-0472">Membrane</keyword>
<keyword id="KW-1185">Reference proteome</keyword>
<keyword id="KW-0812">Transmembrane</keyword>
<keyword id="KW-1133">Transmembrane helix</keyword>
<protein>
    <recommendedName>
        <fullName>UPF0494 membrane protein C212.04c</fullName>
    </recommendedName>
</protein>
<feature type="chain" id="PRO_0000306284" description="UPF0494 membrane protein C212.04c">
    <location>
        <begin position="1"/>
        <end position="288"/>
    </location>
</feature>
<feature type="transmembrane region" description="Helical" evidence="1">
    <location>
        <begin position="107"/>
        <end position="127"/>
    </location>
</feature>
<feature type="transmembrane region" description="Helical" evidence="1">
    <location>
        <begin position="144"/>
        <end position="164"/>
    </location>
</feature>
<feature type="transmembrane region" description="Helical" evidence="1">
    <location>
        <begin position="174"/>
        <end position="194"/>
    </location>
</feature>
<feature type="transmembrane region" description="Helical" evidence="1">
    <location>
        <begin position="198"/>
        <end position="218"/>
    </location>
</feature>
<evidence type="ECO:0000255" key="1"/>
<evidence type="ECO:0000269" key="2">
    <source>
    </source>
</evidence>
<evidence type="ECO:0000305" key="3"/>
<evidence type="ECO:0000312" key="4">
    <source>
        <dbReference type="EMBL" id="CAC05738.1"/>
    </source>
</evidence>
<organism>
    <name type="scientific">Schizosaccharomyces pombe (strain 972 / ATCC 24843)</name>
    <name type="common">Fission yeast</name>
    <dbReference type="NCBI Taxonomy" id="284812"/>
    <lineage>
        <taxon>Eukaryota</taxon>
        <taxon>Fungi</taxon>
        <taxon>Dikarya</taxon>
        <taxon>Ascomycota</taxon>
        <taxon>Taphrinomycotina</taxon>
        <taxon>Schizosaccharomycetes</taxon>
        <taxon>Schizosaccharomycetales</taxon>
        <taxon>Schizosaccharomycetaceae</taxon>
        <taxon>Schizosaccharomyces</taxon>
    </lineage>
</organism>
<name>YM04_SCHPO</name>
<reference evidence="4" key="1">
    <citation type="journal article" date="2002" name="Nature">
        <title>The genome sequence of Schizosaccharomyces pombe.</title>
        <authorList>
            <person name="Wood V."/>
            <person name="Gwilliam R."/>
            <person name="Rajandream M.A."/>
            <person name="Lyne M.H."/>
            <person name="Lyne R."/>
            <person name="Stewart A."/>
            <person name="Sgouros J.G."/>
            <person name="Peat N."/>
            <person name="Hayles J."/>
            <person name="Baker S.G."/>
            <person name="Basham D."/>
            <person name="Bowman S."/>
            <person name="Brooks K."/>
            <person name="Brown D."/>
            <person name="Brown S."/>
            <person name="Chillingworth T."/>
            <person name="Churcher C.M."/>
            <person name="Collins M."/>
            <person name="Connor R."/>
            <person name="Cronin A."/>
            <person name="Davis P."/>
            <person name="Feltwell T."/>
            <person name="Fraser A."/>
            <person name="Gentles S."/>
            <person name="Goble A."/>
            <person name="Hamlin N."/>
            <person name="Harris D.E."/>
            <person name="Hidalgo J."/>
            <person name="Hodgson G."/>
            <person name="Holroyd S."/>
            <person name="Hornsby T."/>
            <person name="Howarth S."/>
            <person name="Huckle E.J."/>
            <person name="Hunt S."/>
            <person name="Jagels K."/>
            <person name="James K.D."/>
            <person name="Jones L."/>
            <person name="Jones M."/>
            <person name="Leather S."/>
            <person name="McDonald S."/>
            <person name="McLean J."/>
            <person name="Mooney P."/>
            <person name="Moule S."/>
            <person name="Mungall K.L."/>
            <person name="Murphy L.D."/>
            <person name="Niblett D."/>
            <person name="Odell C."/>
            <person name="Oliver K."/>
            <person name="O'Neil S."/>
            <person name="Pearson D."/>
            <person name="Quail M.A."/>
            <person name="Rabbinowitsch E."/>
            <person name="Rutherford K.M."/>
            <person name="Rutter S."/>
            <person name="Saunders D."/>
            <person name="Seeger K."/>
            <person name="Sharp S."/>
            <person name="Skelton J."/>
            <person name="Simmonds M.N."/>
            <person name="Squares R."/>
            <person name="Squares S."/>
            <person name="Stevens K."/>
            <person name="Taylor K."/>
            <person name="Taylor R.G."/>
            <person name="Tivey A."/>
            <person name="Walsh S.V."/>
            <person name="Warren T."/>
            <person name="Whitehead S."/>
            <person name="Woodward J.R."/>
            <person name="Volckaert G."/>
            <person name="Aert R."/>
            <person name="Robben J."/>
            <person name="Grymonprez B."/>
            <person name="Weltjens I."/>
            <person name="Vanstreels E."/>
            <person name="Rieger M."/>
            <person name="Schaefer M."/>
            <person name="Mueller-Auer S."/>
            <person name="Gabel C."/>
            <person name="Fuchs M."/>
            <person name="Duesterhoeft A."/>
            <person name="Fritzc C."/>
            <person name="Holzer E."/>
            <person name="Moestl D."/>
            <person name="Hilbert H."/>
            <person name="Borzym K."/>
            <person name="Langer I."/>
            <person name="Beck A."/>
            <person name="Lehrach H."/>
            <person name="Reinhardt R."/>
            <person name="Pohl T.M."/>
            <person name="Eger P."/>
            <person name="Zimmermann W."/>
            <person name="Wedler H."/>
            <person name="Wambutt R."/>
            <person name="Purnelle B."/>
            <person name="Goffeau A."/>
            <person name="Cadieu E."/>
            <person name="Dreano S."/>
            <person name="Gloux S."/>
            <person name="Lelaure V."/>
            <person name="Mottier S."/>
            <person name="Galibert F."/>
            <person name="Aves S.J."/>
            <person name="Xiang Z."/>
            <person name="Hunt C."/>
            <person name="Moore K."/>
            <person name="Hurst S.M."/>
            <person name="Lucas M."/>
            <person name="Rochet M."/>
            <person name="Gaillardin C."/>
            <person name="Tallada V.A."/>
            <person name="Garzon A."/>
            <person name="Thode G."/>
            <person name="Daga R.R."/>
            <person name="Cruzado L."/>
            <person name="Jimenez J."/>
            <person name="Sanchez M."/>
            <person name="del Rey F."/>
            <person name="Benito J."/>
            <person name="Dominguez A."/>
            <person name="Revuelta J.L."/>
            <person name="Moreno S."/>
            <person name="Armstrong J."/>
            <person name="Forsburg S.L."/>
            <person name="Cerutti L."/>
            <person name="Lowe T."/>
            <person name="McCombie W.R."/>
            <person name="Paulsen I."/>
            <person name="Potashkin J."/>
            <person name="Shpakovski G.V."/>
            <person name="Ussery D."/>
            <person name="Barrell B.G."/>
            <person name="Nurse P."/>
        </authorList>
    </citation>
    <scope>NUCLEOTIDE SEQUENCE [LARGE SCALE GENOMIC DNA]</scope>
    <source>
        <strain>972 / ATCC 24843</strain>
    </source>
</reference>
<reference evidence="3" key="2">
    <citation type="journal article" date="2006" name="Nat. Biotechnol.">
        <title>ORFeome cloning and global analysis of protein localization in the fission yeast Schizosaccharomyces pombe.</title>
        <authorList>
            <person name="Matsuyama A."/>
            <person name="Arai R."/>
            <person name="Yashiroda Y."/>
            <person name="Shirai A."/>
            <person name="Kamata A."/>
            <person name="Sekido S."/>
            <person name="Kobayashi Y."/>
            <person name="Hashimoto A."/>
            <person name="Hamamoto M."/>
            <person name="Hiraoka Y."/>
            <person name="Horinouchi S."/>
            <person name="Yoshida M."/>
        </authorList>
    </citation>
    <scope>SUBCELLULAR LOCATION [LARGE SCALE ANALYSIS]</scope>
</reference>
<accession>Q9HGP8</accession>
<comment type="subcellular location">
    <subcellularLocation>
        <location evidence="2">Cytoplasm</location>
    </subcellularLocation>
    <subcellularLocation>
        <location evidence="2">Endoplasmic reticulum</location>
    </subcellularLocation>
    <subcellularLocation>
        <location evidence="1">Membrane</location>
        <topology evidence="1">Multi-pass membrane protein</topology>
    </subcellularLocation>
</comment>
<comment type="similarity">
    <text evidence="3">Belongs to the UPF0494 family.</text>
</comment>
<sequence>MSNPESLKKQVEPPGYNELFMVEDVCNVDLEQGLDLCKPEKVNKQSQRSRQSRQSLFTNTIKPQKDKMNIKTNKIKEFLNDLFTEFSKFHNSYYPNGRISTQDKSRWVLLIIWSIITILTIDKKFKIKESYLEWIGENQSHSEIWGPIVIYVGLFILLLSAFNYCSKLIIKALPLISMVIAWVGVVIAAFSVIITATIAGVIAAFSVIITATIAGVIAAMVGILYFGHWLVYKILILAFGFKIVTSGDVCVSNTLPTHNGETALHSDATVGSDIEQIELQNMPTPVKK</sequence>
<proteinExistence type="inferred from homology"/>
<gene>
    <name type="ORF">SPAC212.04c</name>
</gene>
<dbReference type="EMBL" id="CU329670">
    <property type="protein sequence ID" value="CAC05738.1"/>
    <property type="molecule type" value="Genomic_DNA"/>
</dbReference>
<dbReference type="RefSeq" id="NP_595038.1">
    <property type="nucleotide sequence ID" value="NM_001018170.2"/>
</dbReference>
<dbReference type="SMR" id="Q9HGP8"/>
<dbReference type="BioGRID" id="278401">
    <property type="interactions" value="28"/>
</dbReference>
<dbReference type="STRING" id="284812.Q9HGP8"/>
<dbReference type="PaxDb" id="4896-SPAC212.04c.1"/>
<dbReference type="EnsemblFungi" id="SPAC212.04c.1">
    <property type="protein sequence ID" value="SPAC212.04c.1:pep"/>
    <property type="gene ID" value="SPAC212.04c"/>
</dbReference>
<dbReference type="KEGG" id="spo:2541911"/>
<dbReference type="PomBase" id="SPAC212.04c"/>
<dbReference type="VEuPathDB" id="FungiDB:SPAC212.04c"/>
<dbReference type="HOGENOM" id="CLU_097271_0_0_1"/>
<dbReference type="InParanoid" id="Q9HGP8"/>
<dbReference type="OMA" id="QSHSEIW"/>
<dbReference type="PhylomeDB" id="Q9HGP8"/>
<dbReference type="PRO" id="PR:Q9HGP8"/>
<dbReference type="Proteomes" id="UP000002485">
    <property type="component" value="Chromosome I"/>
</dbReference>
<dbReference type="GO" id="GO:0005737">
    <property type="term" value="C:cytoplasm"/>
    <property type="evidence" value="ECO:0007005"/>
    <property type="project" value="PomBase"/>
</dbReference>
<dbReference type="GO" id="GO:0005783">
    <property type="term" value="C:endoplasmic reticulum"/>
    <property type="evidence" value="ECO:0007005"/>
    <property type="project" value="PomBase"/>
</dbReference>
<dbReference type="GO" id="GO:0016020">
    <property type="term" value="C:membrane"/>
    <property type="evidence" value="ECO:0007669"/>
    <property type="project" value="UniProtKB-SubCell"/>
</dbReference>
<dbReference type="InterPro" id="IPR009340">
    <property type="entry name" value="DUF999"/>
</dbReference>
<dbReference type="Pfam" id="PF06198">
    <property type="entry name" value="DUF999"/>
    <property type="match status" value="1"/>
</dbReference>